<feature type="signal peptide" evidence="2">
    <location>
        <begin position="1"/>
        <end position="20"/>
    </location>
</feature>
<feature type="chain" id="PRO_0000403107" description="Probable L-type lectin-domain containing receptor kinase S.5">
    <location>
        <begin position="21"/>
        <end position="652"/>
    </location>
</feature>
<feature type="topological domain" description="Extracellular" evidence="2">
    <location>
        <begin position="21"/>
        <end position="266"/>
    </location>
</feature>
<feature type="transmembrane region" description="Helical" evidence="2">
    <location>
        <begin position="267"/>
        <end position="287"/>
    </location>
</feature>
<feature type="topological domain" description="Cytoplasmic" evidence="2">
    <location>
        <begin position="288"/>
        <end position="652"/>
    </location>
</feature>
<feature type="domain" description="Protein kinase" evidence="3">
    <location>
        <begin position="330"/>
        <end position="622"/>
    </location>
</feature>
<feature type="region of interest" description="Legume-lectin like">
    <location>
        <begin position="24"/>
        <end position="257"/>
    </location>
</feature>
<feature type="active site" description="Proton acceptor" evidence="3 4">
    <location>
        <position position="455"/>
    </location>
</feature>
<feature type="binding site" evidence="3">
    <location>
        <begin position="336"/>
        <end position="344"/>
    </location>
    <ligand>
        <name>ATP</name>
        <dbReference type="ChEBI" id="CHEBI:30616"/>
    </ligand>
</feature>
<feature type="binding site" evidence="3">
    <location>
        <position position="357"/>
    </location>
    <ligand>
        <name>ATP</name>
        <dbReference type="ChEBI" id="CHEBI:30616"/>
    </ligand>
</feature>
<feature type="glycosylation site" description="N-linked (GlcNAc...) asparagine" evidence="2">
    <location>
        <position position="33"/>
    </location>
</feature>
<feature type="glycosylation site" description="N-linked (GlcNAc...) asparagine" evidence="2">
    <location>
        <position position="91"/>
    </location>
</feature>
<feature type="glycosylation site" description="N-linked (GlcNAc...) asparagine" evidence="2">
    <location>
        <position position="97"/>
    </location>
</feature>
<feature type="glycosylation site" description="N-linked (GlcNAc...) asparagine" evidence="2">
    <location>
        <position position="100"/>
    </location>
</feature>
<feature type="glycosylation site" description="N-linked (GlcNAc...) asparagine" evidence="2">
    <location>
        <position position="122"/>
    </location>
</feature>
<feature type="glycosylation site" description="N-linked (GlcNAc...) asparagine" evidence="2">
    <location>
        <position position="139"/>
    </location>
</feature>
<feature type="glycosylation site" description="N-linked (GlcNAc...) asparagine" evidence="2">
    <location>
        <position position="201"/>
    </location>
</feature>
<feature type="glycosylation site" description="N-linked (GlcNAc...) asparagine" evidence="2">
    <location>
        <position position="244"/>
    </location>
</feature>
<evidence type="ECO:0000250" key="1"/>
<evidence type="ECO:0000255" key="2"/>
<evidence type="ECO:0000255" key="3">
    <source>
        <dbReference type="PROSITE-ProRule" id="PRU00159"/>
    </source>
</evidence>
<evidence type="ECO:0000255" key="4">
    <source>
        <dbReference type="PROSITE-ProRule" id="PRU10027"/>
    </source>
</evidence>
<evidence type="ECO:0000305" key="5"/>
<comment type="catalytic activity">
    <reaction>
        <text>L-seryl-[protein] + ATP = O-phospho-L-seryl-[protein] + ADP + H(+)</text>
        <dbReference type="Rhea" id="RHEA:17989"/>
        <dbReference type="Rhea" id="RHEA-COMP:9863"/>
        <dbReference type="Rhea" id="RHEA-COMP:11604"/>
        <dbReference type="ChEBI" id="CHEBI:15378"/>
        <dbReference type="ChEBI" id="CHEBI:29999"/>
        <dbReference type="ChEBI" id="CHEBI:30616"/>
        <dbReference type="ChEBI" id="CHEBI:83421"/>
        <dbReference type="ChEBI" id="CHEBI:456216"/>
        <dbReference type="EC" id="2.7.11.1"/>
    </reaction>
</comment>
<comment type="catalytic activity">
    <reaction>
        <text>L-threonyl-[protein] + ATP = O-phospho-L-threonyl-[protein] + ADP + H(+)</text>
        <dbReference type="Rhea" id="RHEA:46608"/>
        <dbReference type="Rhea" id="RHEA-COMP:11060"/>
        <dbReference type="Rhea" id="RHEA-COMP:11605"/>
        <dbReference type="ChEBI" id="CHEBI:15378"/>
        <dbReference type="ChEBI" id="CHEBI:30013"/>
        <dbReference type="ChEBI" id="CHEBI:30616"/>
        <dbReference type="ChEBI" id="CHEBI:61977"/>
        <dbReference type="ChEBI" id="CHEBI:456216"/>
        <dbReference type="EC" id="2.7.11.1"/>
    </reaction>
</comment>
<comment type="subcellular location">
    <subcellularLocation>
        <location evidence="1">Cell membrane</location>
        <topology evidence="1">Single-pass type I membrane protein</topology>
    </subcellularLocation>
</comment>
<comment type="similarity">
    <text evidence="5">In the C-terminal section; belongs to the protein kinase superfamily. Ser/Thr protein kinase family.</text>
</comment>
<comment type="similarity">
    <text evidence="5">In the N-terminal section; belongs to the leguminous lectin family.</text>
</comment>
<dbReference type="EC" id="2.7.11.1"/>
<dbReference type="EMBL" id="AP002032">
    <property type="protein sequence ID" value="BAB09808.1"/>
    <property type="molecule type" value="Genomic_DNA"/>
</dbReference>
<dbReference type="EMBL" id="CP002688">
    <property type="protein sequence ID" value="AED91057.1"/>
    <property type="molecule type" value="Genomic_DNA"/>
</dbReference>
<dbReference type="RefSeq" id="NP_196292.1">
    <property type="nucleotide sequence ID" value="NM_120757.2"/>
</dbReference>
<dbReference type="SMR" id="Q9FG33"/>
<dbReference type="BioGRID" id="15842">
    <property type="interactions" value="1"/>
</dbReference>
<dbReference type="FunCoup" id="Q9FG33">
    <property type="interactions" value="168"/>
</dbReference>
<dbReference type="STRING" id="3702.Q9FG33"/>
<dbReference type="GlyCosmos" id="Q9FG33">
    <property type="glycosylation" value="8 sites, No reported glycans"/>
</dbReference>
<dbReference type="GlyGen" id="Q9FG33">
    <property type="glycosylation" value="8 sites"/>
</dbReference>
<dbReference type="PaxDb" id="3702-AT5G06740.1"/>
<dbReference type="EnsemblPlants" id="AT5G06740.1">
    <property type="protein sequence ID" value="AT5G06740.1"/>
    <property type="gene ID" value="AT5G06740"/>
</dbReference>
<dbReference type="GeneID" id="830563"/>
<dbReference type="Gramene" id="AT5G06740.1">
    <property type="protein sequence ID" value="AT5G06740.1"/>
    <property type="gene ID" value="AT5G06740"/>
</dbReference>
<dbReference type="KEGG" id="ath:AT5G06740"/>
<dbReference type="Araport" id="AT5G06740"/>
<dbReference type="TAIR" id="AT5G06740">
    <property type="gene designation" value="LECRK-S.5"/>
</dbReference>
<dbReference type="eggNOG" id="ENOG502QT06">
    <property type="taxonomic scope" value="Eukaryota"/>
</dbReference>
<dbReference type="HOGENOM" id="CLU_000288_62_6_1"/>
<dbReference type="InParanoid" id="Q9FG33"/>
<dbReference type="OMA" id="HRSGRVC"/>
<dbReference type="OrthoDB" id="1913956at2759"/>
<dbReference type="PhylomeDB" id="Q9FG33"/>
<dbReference type="PRO" id="PR:Q9FG33"/>
<dbReference type="Proteomes" id="UP000006548">
    <property type="component" value="Chromosome 5"/>
</dbReference>
<dbReference type="ExpressionAtlas" id="Q9FG33">
    <property type="expression patterns" value="baseline and differential"/>
</dbReference>
<dbReference type="GO" id="GO:0005886">
    <property type="term" value="C:plasma membrane"/>
    <property type="evidence" value="ECO:0000250"/>
    <property type="project" value="UniProtKB"/>
</dbReference>
<dbReference type="GO" id="GO:0005524">
    <property type="term" value="F:ATP binding"/>
    <property type="evidence" value="ECO:0007669"/>
    <property type="project" value="UniProtKB-KW"/>
</dbReference>
<dbReference type="GO" id="GO:0030246">
    <property type="term" value="F:carbohydrate binding"/>
    <property type="evidence" value="ECO:0007669"/>
    <property type="project" value="UniProtKB-KW"/>
</dbReference>
<dbReference type="GO" id="GO:0106310">
    <property type="term" value="F:protein serine kinase activity"/>
    <property type="evidence" value="ECO:0007669"/>
    <property type="project" value="RHEA"/>
</dbReference>
<dbReference type="GO" id="GO:0004674">
    <property type="term" value="F:protein serine/threonine kinase activity"/>
    <property type="evidence" value="ECO:0007669"/>
    <property type="project" value="UniProtKB-KW"/>
</dbReference>
<dbReference type="CDD" id="cd06899">
    <property type="entry name" value="lectin_legume_LecRK_Arcelin_ConA"/>
    <property type="match status" value="1"/>
</dbReference>
<dbReference type="CDD" id="cd14066">
    <property type="entry name" value="STKc_IRAK"/>
    <property type="match status" value="1"/>
</dbReference>
<dbReference type="FunFam" id="2.60.120.200:FF:000198">
    <property type="entry name" value="Probable L-type lectin-domain containing receptor kinase S.5"/>
    <property type="match status" value="1"/>
</dbReference>
<dbReference type="FunFam" id="3.30.200.20:FF:000476">
    <property type="entry name" value="Probable L-type lectin-domain containing receptor kinase S.5"/>
    <property type="match status" value="1"/>
</dbReference>
<dbReference type="FunFam" id="1.10.510.10:FF:000626">
    <property type="entry name" value="probable L-type lectin-domain containing receptor kinase S.5"/>
    <property type="match status" value="1"/>
</dbReference>
<dbReference type="Gene3D" id="2.60.120.200">
    <property type="match status" value="1"/>
</dbReference>
<dbReference type="Gene3D" id="3.30.200.20">
    <property type="entry name" value="Phosphorylase Kinase, domain 1"/>
    <property type="match status" value="1"/>
</dbReference>
<dbReference type="Gene3D" id="1.10.510.10">
    <property type="entry name" value="Transferase(Phosphotransferase) domain 1"/>
    <property type="match status" value="1"/>
</dbReference>
<dbReference type="InterPro" id="IPR013320">
    <property type="entry name" value="ConA-like_dom_sf"/>
</dbReference>
<dbReference type="InterPro" id="IPR011009">
    <property type="entry name" value="Kinase-like_dom_sf"/>
</dbReference>
<dbReference type="InterPro" id="IPR050528">
    <property type="entry name" value="L-type_Lectin-RKs"/>
</dbReference>
<dbReference type="InterPro" id="IPR019825">
    <property type="entry name" value="Lectin_legB_Mn/Ca_BS"/>
</dbReference>
<dbReference type="InterPro" id="IPR001220">
    <property type="entry name" value="Legume_lectin_dom"/>
</dbReference>
<dbReference type="InterPro" id="IPR000719">
    <property type="entry name" value="Prot_kinase_dom"/>
</dbReference>
<dbReference type="InterPro" id="IPR017441">
    <property type="entry name" value="Protein_kinase_ATP_BS"/>
</dbReference>
<dbReference type="InterPro" id="IPR008271">
    <property type="entry name" value="Ser/Thr_kinase_AS"/>
</dbReference>
<dbReference type="PANTHER" id="PTHR27007">
    <property type="match status" value="1"/>
</dbReference>
<dbReference type="Pfam" id="PF00139">
    <property type="entry name" value="Lectin_legB"/>
    <property type="match status" value="1"/>
</dbReference>
<dbReference type="Pfam" id="PF00069">
    <property type="entry name" value="Pkinase"/>
    <property type="match status" value="1"/>
</dbReference>
<dbReference type="SMART" id="SM00220">
    <property type="entry name" value="S_TKc"/>
    <property type="match status" value="1"/>
</dbReference>
<dbReference type="SUPFAM" id="SSF49899">
    <property type="entry name" value="Concanavalin A-like lectins/glucanases"/>
    <property type="match status" value="1"/>
</dbReference>
<dbReference type="SUPFAM" id="SSF56112">
    <property type="entry name" value="Protein kinase-like (PK-like)"/>
    <property type="match status" value="1"/>
</dbReference>
<dbReference type="PROSITE" id="PS00307">
    <property type="entry name" value="LECTIN_LEGUME_BETA"/>
    <property type="match status" value="1"/>
</dbReference>
<dbReference type="PROSITE" id="PS00107">
    <property type="entry name" value="PROTEIN_KINASE_ATP"/>
    <property type="match status" value="1"/>
</dbReference>
<dbReference type="PROSITE" id="PS50011">
    <property type="entry name" value="PROTEIN_KINASE_DOM"/>
    <property type="match status" value="1"/>
</dbReference>
<dbReference type="PROSITE" id="PS00108">
    <property type="entry name" value="PROTEIN_KINASE_ST"/>
    <property type="match status" value="1"/>
</dbReference>
<reference key="1">
    <citation type="submission" date="2000-05" db="EMBL/GenBank/DDBJ databases">
        <title>Structural analysis of Arabidopsis thaliana chromosome 5. XI.</title>
        <authorList>
            <person name="Kaneko T."/>
            <person name="Katoh T."/>
            <person name="Asamizu E."/>
            <person name="Sato S."/>
            <person name="Nakamura Y."/>
            <person name="Kotani H."/>
            <person name="Tabata S."/>
        </authorList>
    </citation>
    <scope>NUCLEOTIDE SEQUENCE [LARGE SCALE GENOMIC DNA]</scope>
    <source>
        <strain>cv. Columbia</strain>
    </source>
</reference>
<reference key="2">
    <citation type="journal article" date="2017" name="Plant J.">
        <title>Araport11: a complete reannotation of the Arabidopsis thaliana reference genome.</title>
        <authorList>
            <person name="Cheng C.Y."/>
            <person name="Krishnakumar V."/>
            <person name="Chan A.P."/>
            <person name="Thibaud-Nissen F."/>
            <person name="Schobel S."/>
            <person name="Town C.D."/>
        </authorList>
    </citation>
    <scope>GENOME REANNOTATION</scope>
    <source>
        <strain>cv. Columbia</strain>
    </source>
</reference>
<reference key="3">
    <citation type="journal article" date="2002" name="Crit. Rev. Plant Sci.">
        <title>Lectin receptor kinases in plants.</title>
        <authorList>
            <person name="Barre A."/>
            <person name="Herve C."/>
            <person name="Lescure B."/>
            <person name="Rouge P."/>
        </authorList>
    </citation>
    <scope>GENE FAMILY</scope>
</reference>
<reference key="4">
    <citation type="journal article" date="2009" name="J. Exp. Bot.">
        <title>Arabidopsis L-type lectin receptor kinases: phylogeny, classification, and expression profiles.</title>
        <authorList>
            <person name="Bouwmeester K."/>
            <person name="Govers F."/>
        </authorList>
    </citation>
    <scope>GENE FAMILY</scope>
    <scope>NOMENCLATURE</scope>
</reference>
<protein>
    <recommendedName>
        <fullName>Probable L-type lectin-domain containing receptor kinase S.5</fullName>
        <shortName>LecRK-S.5</shortName>
        <ecNumber>2.7.11.1</ecNumber>
    </recommendedName>
</protein>
<accession>Q9FG33</accession>
<sequence>MRFSLAWKLLFLILTCKIETQVKCLKFDFPGFNVSNELELIRDNSYIVFGAIQVTPDVTGGPGGTIANQAGRALYKKPFRLWSKHKSATFNTTFVINISNKTDPGGEGLAFVLTPEETAPQNSSGMWLGMVNERTNRNNESRIVSVEFDTRKSHSDDLDGNHVALNVNNINSVVQESLSGRGIKIDSGLDLTAHVRYDGKNLSVYVSRNLDVFEQRNLVFSRAIDLSAYLPETVYVGFTASTSNFTELNCVRSWSFEGLKIDGDGNMLWLWITIPIVFIVGIGAFLGALYLRSRSKAGETNPDIEAELDNCAANPQKFKLRELKRATGNFGAENKLGQGGFGMVFKGKWQGRDIAVKRVSEKSHQGKQEFIAEITTIGNLNHRNLVKLLGWCYERKEYLLVYEYMPNGSLDKYLFLEDKSRSNLTWETRKNIITGLSQALEYLHNGCEKRILHRDIKASNVMLDSDFNAKLGDFGLARMIQQSEMTHHSTKEIAGTPGYMAPETFLNGRATVETDVYAFGVLMLEVVSGKKPSYVLVKDNQNNYNNSIVNWLWELYRNGTITDAADPGMGNLFDKEEMKSVLLLGLACCHPNPNQRPSMKTVLKVLTGETSPPDVPTERPAFVWPAMPPSFSDIDYSLTGSQINSLTELTGR</sequence>
<name>LRKS5_ARATH</name>
<proteinExistence type="evidence at transcript level"/>
<keyword id="KW-0067">ATP-binding</keyword>
<keyword id="KW-1003">Cell membrane</keyword>
<keyword id="KW-0325">Glycoprotein</keyword>
<keyword id="KW-0418">Kinase</keyword>
<keyword id="KW-0430">Lectin</keyword>
<keyword id="KW-0472">Membrane</keyword>
<keyword id="KW-0547">Nucleotide-binding</keyword>
<keyword id="KW-0675">Receptor</keyword>
<keyword id="KW-1185">Reference proteome</keyword>
<keyword id="KW-0723">Serine/threonine-protein kinase</keyword>
<keyword id="KW-0732">Signal</keyword>
<keyword id="KW-0808">Transferase</keyword>
<keyword id="KW-0812">Transmembrane</keyword>
<keyword id="KW-1133">Transmembrane helix</keyword>
<gene>
    <name type="primary">LECRKS5</name>
    <name type="ordered locus">At5g06740</name>
    <name type="ORF">MPH15.10</name>
</gene>
<organism>
    <name type="scientific">Arabidopsis thaliana</name>
    <name type="common">Mouse-ear cress</name>
    <dbReference type="NCBI Taxonomy" id="3702"/>
    <lineage>
        <taxon>Eukaryota</taxon>
        <taxon>Viridiplantae</taxon>
        <taxon>Streptophyta</taxon>
        <taxon>Embryophyta</taxon>
        <taxon>Tracheophyta</taxon>
        <taxon>Spermatophyta</taxon>
        <taxon>Magnoliopsida</taxon>
        <taxon>eudicotyledons</taxon>
        <taxon>Gunneridae</taxon>
        <taxon>Pentapetalae</taxon>
        <taxon>rosids</taxon>
        <taxon>malvids</taxon>
        <taxon>Brassicales</taxon>
        <taxon>Brassicaceae</taxon>
        <taxon>Camelineae</taxon>
        <taxon>Arabidopsis</taxon>
    </lineage>
</organism>